<reference key="1">
    <citation type="journal article" date="2005" name="J. Bacteriol.">
        <title>Insights into genome plasticity and pathogenicity of the plant pathogenic Bacterium Xanthomonas campestris pv. vesicatoria revealed by the complete genome sequence.</title>
        <authorList>
            <person name="Thieme F."/>
            <person name="Koebnik R."/>
            <person name="Bekel T."/>
            <person name="Berger C."/>
            <person name="Boch J."/>
            <person name="Buettner D."/>
            <person name="Caldana C."/>
            <person name="Gaigalat L."/>
            <person name="Goesmann A."/>
            <person name="Kay S."/>
            <person name="Kirchner O."/>
            <person name="Lanz C."/>
            <person name="Linke B."/>
            <person name="McHardy A.C."/>
            <person name="Meyer F."/>
            <person name="Mittenhuber G."/>
            <person name="Nies D.H."/>
            <person name="Niesbach-Kloesgen U."/>
            <person name="Patschkowski T."/>
            <person name="Rueckert C."/>
            <person name="Rupp O."/>
            <person name="Schneiker S."/>
            <person name="Schuster S.C."/>
            <person name="Vorhoelter F.J."/>
            <person name="Weber E."/>
            <person name="Puehler A."/>
            <person name="Bonas U."/>
            <person name="Bartels D."/>
            <person name="Kaiser O."/>
        </authorList>
    </citation>
    <scope>NUCLEOTIDE SEQUENCE [LARGE SCALE GENOMIC DNA]</scope>
    <source>
        <strain>85-10</strain>
    </source>
</reference>
<organism>
    <name type="scientific">Xanthomonas euvesicatoria pv. vesicatoria (strain 85-10)</name>
    <name type="common">Xanthomonas campestris pv. vesicatoria</name>
    <dbReference type="NCBI Taxonomy" id="316273"/>
    <lineage>
        <taxon>Bacteria</taxon>
        <taxon>Pseudomonadati</taxon>
        <taxon>Pseudomonadota</taxon>
        <taxon>Gammaproteobacteria</taxon>
        <taxon>Lysobacterales</taxon>
        <taxon>Lysobacteraceae</taxon>
        <taxon>Xanthomonas</taxon>
    </lineage>
</organism>
<gene>
    <name evidence="1" type="primary">tolB</name>
    <name type="ordered locus">XCV3272</name>
</gene>
<dbReference type="EMBL" id="AM039952">
    <property type="protein sequence ID" value="CAJ25003.1"/>
    <property type="molecule type" value="Genomic_DNA"/>
</dbReference>
<dbReference type="RefSeq" id="WP_003482565.1">
    <property type="nucleotide sequence ID" value="NZ_CP017190.1"/>
</dbReference>
<dbReference type="SMR" id="Q3BQG0"/>
<dbReference type="STRING" id="456327.BJD11_06405"/>
<dbReference type="GeneID" id="97511398"/>
<dbReference type="KEGG" id="xcv:XCV3272"/>
<dbReference type="eggNOG" id="COG0823">
    <property type="taxonomic scope" value="Bacteria"/>
</dbReference>
<dbReference type="HOGENOM" id="CLU_047123_0_0_6"/>
<dbReference type="Proteomes" id="UP000007069">
    <property type="component" value="Chromosome"/>
</dbReference>
<dbReference type="GO" id="GO:0042597">
    <property type="term" value="C:periplasmic space"/>
    <property type="evidence" value="ECO:0007669"/>
    <property type="project" value="UniProtKB-SubCell"/>
</dbReference>
<dbReference type="GO" id="GO:0051301">
    <property type="term" value="P:cell division"/>
    <property type="evidence" value="ECO:0007669"/>
    <property type="project" value="UniProtKB-UniRule"/>
</dbReference>
<dbReference type="GO" id="GO:0017038">
    <property type="term" value="P:protein import"/>
    <property type="evidence" value="ECO:0007669"/>
    <property type="project" value="InterPro"/>
</dbReference>
<dbReference type="Gene3D" id="2.120.10.30">
    <property type="entry name" value="TolB, C-terminal domain"/>
    <property type="match status" value="1"/>
</dbReference>
<dbReference type="Gene3D" id="3.40.50.10070">
    <property type="entry name" value="TolB, N-terminal domain"/>
    <property type="match status" value="1"/>
</dbReference>
<dbReference type="HAMAP" id="MF_00671">
    <property type="entry name" value="TolB"/>
    <property type="match status" value="1"/>
</dbReference>
<dbReference type="InterPro" id="IPR011042">
    <property type="entry name" value="6-blade_b-propeller_TolB-like"/>
</dbReference>
<dbReference type="InterPro" id="IPR011659">
    <property type="entry name" value="PD40"/>
</dbReference>
<dbReference type="InterPro" id="IPR014167">
    <property type="entry name" value="Tol-Pal_TolB"/>
</dbReference>
<dbReference type="InterPro" id="IPR007195">
    <property type="entry name" value="TolB_N"/>
</dbReference>
<dbReference type="NCBIfam" id="TIGR02800">
    <property type="entry name" value="propeller_TolB"/>
    <property type="match status" value="1"/>
</dbReference>
<dbReference type="PANTHER" id="PTHR36842:SF1">
    <property type="entry name" value="PROTEIN TOLB"/>
    <property type="match status" value="1"/>
</dbReference>
<dbReference type="PANTHER" id="PTHR36842">
    <property type="entry name" value="PROTEIN TOLB HOMOLOG"/>
    <property type="match status" value="1"/>
</dbReference>
<dbReference type="Pfam" id="PF07676">
    <property type="entry name" value="PD40"/>
    <property type="match status" value="3"/>
</dbReference>
<dbReference type="Pfam" id="PF04052">
    <property type="entry name" value="TolB_N"/>
    <property type="match status" value="1"/>
</dbReference>
<dbReference type="SUPFAM" id="SSF52964">
    <property type="entry name" value="TolB, N-terminal domain"/>
    <property type="match status" value="1"/>
</dbReference>
<dbReference type="SUPFAM" id="SSF69304">
    <property type="entry name" value="Tricorn protease N-terminal domain"/>
    <property type="match status" value="1"/>
</dbReference>
<name>TOLB_XANE5</name>
<keyword id="KW-0131">Cell cycle</keyword>
<keyword id="KW-0132">Cell division</keyword>
<keyword id="KW-0574">Periplasm</keyword>
<keyword id="KW-0732">Signal</keyword>
<sequence>MKKPLRWLAALTALLLPLSALAQQQGLTIDIVGGSASATPIAVIPMPYQGSGTAPQTDVSAVVGADLDRSGQFRTLPAAQIVEKPTRGTEVQFQTWRTLKQNYIVVGRVMDAGEGAYRVEYELFDVAKGERMLGLAMTARANAMRDVSHQMADAIYEKITGVRGAFWTRIAYVTASGKGGAMRYALMVADSDGYNPQTIVRSAEPLLSPNWSPDGKKLAYVSFERGNSSIYLQDIATGARELVSSFRGINGAPSFSPDGRRLALALSRSGNPEIYVMDLGSKQLTQLTNHFGIDTEPTWAPDGGSIYFTSDRGGRPQIYQVAASGGSANRVTFQGNYNATASVSFDGKKIAVAQGSGNTYRIAMMDRSLGSPSWSTLSPGSLDESPSFAPNASMVLYAAREGGRGVLYAVSSDARVRQRLVLADGDVREPAWGPYRTAH</sequence>
<feature type="signal peptide" evidence="1">
    <location>
        <begin position="1"/>
        <end position="22"/>
    </location>
</feature>
<feature type="chain" id="PRO_0000259098" description="Tol-Pal system protein TolB" evidence="1">
    <location>
        <begin position="23"/>
        <end position="439"/>
    </location>
</feature>
<evidence type="ECO:0000255" key="1">
    <source>
        <dbReference type="HAMAP-Rule" id="MF_00671"/>
    </source>
</evidence>
<proteinExistence type="inferred from homology"/>
<comment type="function">
    <text evidence="1">Part of the Tol-Pal system, which plays a role in outer membrane invagination during cell division and is important for maintaining outer membrane integrity.</text>
</comment>
<comment type="subunit">
    <text evidence="1">The Tol-Pal system is composed of five core proteins: the inner membrane proteins TolA, TolQ and TolR, the periplasmic protein TolB and the outer membrane protein Pal. They form a network linking the inner and outer membranes and the peptidoglycan layer.</text>
</comment>
<comment type="subcellular location">
    <subcellularLocation>
        <location evidence="1">Periplasm</location>
    </subcellularLocation>
</comment>
<comment type="similarity">
    <text evidence="1">Belongs to the TolB family.</text>
</comment>
<accession>Q3BQG0</accession>
<protein>
    <recommendedName>
        <fullName evidence="1">Tol-Pal system protein TolB</fullName>
    </recommendedName>
</protein>